<sequence length="169" mass="19693">MAVNISKQPTRSFSLDEVTVRNELKLSQGFVMRKDLKGPRLIVTSGMGSTFSKCSLFIFKAVMILHTCLIVKSIRIFSKKKKRNGSMHNMYYASVPFLLFSNAYSIDFSRHVNEFLEKKRCEMIIPLKLLADHTYLSEIEYVSLNADGQYSQLQDIFFIHDVFFVYFRF</sequence>
<organism>
    <name type="scientific">Saccharomyces cerevisiae (strain ATCC 204508 / S288c)</name>
    <name type="common">Baker's yeast</name>
    <dbReference type="NCBI Taxonomy" id="559292"/>
    <lineage>
        <taxon>Eukaryota</taxon>
        <taxon>Fungi</taxon>
        <taxon>Dikarya</taxon>
        <taxon>Ascomycota</taxon>
        <taxon>Saccharomycotina</taxon>
        <taxon>Saccharomycetes</taxon>
        <taxon>Saccharomycetales</taxon>
        <taxon>Saccharomycetaceae</taxon>
        <taxon>Saccharomyces</taxon>
    </lineage>
</organism>
<keyword id="KW-0472">Membrane</keyword>
<keyword id="KW-0812">Transmembrane</keyword>
<keyword id="KW-1133">Transmembrane helix</keyword>
<name>YD094_YEAST</name>
<proteinExistence type="uncertain"/>
<comment type="subcellular location">
    <subcellularLocation>
        <location evidence="2">Membrane</location>
        <topology evidence="2">Single-pass membrane protein</topology>
    </subcellularLocation>
</comment>
<comment type="miscellaneous">
    <text evidence="2">Partially overlaps PMT5.</text>
</comment>
<comment type="caution">
    <text evidence="3">Product of a dubious gene prediction unlikely to encode a functional protein. Because of that it is not part of the S.cerevisiae S288c complete/reference proteome set.</text>
</comment>
<evidence type="ECO:0000255" key="1"/>
<evidence type="ECO:0000305" key="2"/>
<evidence type="ECO:0000305" key="3">
    <source>
    </source>
</evidence>
<gene>
    <name type="ordered locus">YDL094C</name>
</gene>
<protein>
    <recommendedName>
        <fullName>Putative uncharacterized protein YDL094C</fullName>
    </recommendedName>
</protein>
<feature type="chain" id="PRO_0000299856" description="Putative uncharacterized protein YDL094C">
    <location>
        <begin position="1"/>
        <end position="169"/>
    </location>
</feature>
<feature type="transmembrane region" description="Helical" evidence="1">
    <location>
        <begin position="55"/>
        <end position="77"/>
    </location>
</feature>
<reference key="1">
    <citation type="journal article" date="1997" name="Nature">
        <title>The nucleotide sequence of Saccharomyces cerevisiae chromosome IV.</title>
        <authorList>
            <person name="Jacq C."/>
            <person name="Alt-Moerbe J."/>
            <person name="Andre B."/>
            <person name="Arnold W."/>
            <person name="Bahr A."/>
            <person name="Ballesta J.P.G."/>
            <person name="Bargues M."/>
            <person name="Baron L."/>
            <person name="Becker A."/>
            <person name="Biteau N."/>
            <person name="Bloecker H."/>
            <person name="Blugeon C."/>
            <person name="Boskovic J."/>
            <person name="Brandt P."/>
            <person name="Brueckner M."/>
            <person name="Buitrago M.J."/>
            <person name="Coster F."/>
            <person name="Delaveau T."/>
            <person name="del Rey F."/>
            <person name="Dujon B."/>
            <person name="Eide L.G."/>
            <person name="Garcia-Cantalejo J.M."/>
            <person name="Goffeau A."/>
            <person name="Gomez-Peris A."/>
            <person name="Granotier C."/>
            <person name="Hanemann V."/>
            <person name="Hankeln T."/>
            <person name="Hoheisel J.D."/>
            <person name="Jaeger W."/>
            <person name="Jimenez A."/>
            <person name="Jonniaux J.-L."/>
            <person name="Kraemer C."/>
            <person name="Kuester H."/>
            <person name="Laamanen P."/>
            <person name="Legros Y."/>
            <person name="Louis E.J."/>
            <person name="Moeller-Rieker S."/>
            <person name="Monnet A."/>
            <person name="Moro M."/>
            <person name="Mueller-Auer S."/>
            <person name="Nussbaumer B."/>
            <person name="Paricio N."/>
            <person name="Paulin L."/>
            <person name="Perea J."/>
            <person name="Perez-Alonso M."/>
            <person name="Perez-Ortin J.E."/>
            <person name="Pohl T.M."/>
            <person name="Prydz H."/>
            <person name="Purnelle B."/>
            <person name="Rasmussen S.W."/>
            <person name="Remacha M.A."/>
            <person name="Revuelta J.L."/>
            <person name="Rieger M."/>
            <person name="Salom D."/>
            <person name="Saluz H.P."/>
            <person name="Saiz J.E."/>
            <person name="Saren A.-M."/>
            <person name="Schaefer M."/>
            <person name="Scharfe M."/>
            <person name="Schmidt E.R."/>
            <person name="Schneider C."/>
            <person name="Scholler P."/>
            <person name="Schwarz S."/>
            <person name="Soler-Mira A."/>
            <person name="Urrestarazu L.A."/>
            <person name="Verhasselt P."/>
            <person name="Vissers S."/>
            <person name="Voet M."/>
            <person name="Volckaert G."/>
            <person name="Wagner G."/>
            <person name="Wambutt R."/>
            <person name="Wedler E."/>
            <person name="Wedler H."/>
            <person name="Woelfl S."/>
            <person name="Harris D.E."/>
            <person name="Bowman S."/>
            <person name="Brown D."/>
            <person name="Churcher C.M."/>
            <person name="Connor R."/>
            <person name="Dedman K."/>
            <person name="Gentles S."/>
            <person name="Hamlin N."/>
            <person name="Hunt S."/>
            <person name="Jones L."/>
            <person name="McDonald S."/>
            <person name="Murphy L.D."/>
            <person name="Niblett D."/>
            <person name="Odell C."/>
            <person name="Oliver K."/>
            <person name="Rajandream M.A."/>
            <person name="Richards C."/>
            <person name="Shore L."/>
            <person name="Walsh S.V."/>
            <person name="Barrell B.G."/>
            <person name="Dietrich F.S."/>
            <person name="Mulligan J.T."/>
            <person name="Allen E."/>
            <person name="Araujo R."/>
            <person name="Aviles E."/>
            <person name="Berno A."/>
            <person name="Carpenter J."/>
            <person name="Chen E."/>
            <person name="Cherry J.M."/>
            <person name="Chung E."/>
            <person name="Duncan M."/>
            <person name="Hunicke-Smith S."/>
            <person name="Hyman R.W."/>
            <person name="Komp C."/>
            <person name="Lashkari D."/>
            <person name="Lew H."/>
            <person name="Lin D."/>
            <person name="Mosedale D."/>
            <person name="Nakahara K."/>
            <person name="Namath A."/>
            <person name="Oefner P."/>
            <person name="Oh C."/>
            <person name="Petel F.X."/>
            <person name="Roberts D."/>
            <person name="Schramm S."/>
            <person name="Schroeder M."/>
            <person name="Shogren T."/>
            <person name="Shroff N."/>
            <person name="Winant A."/>
            <person name="Yelton M.A."/>
            <person name="Botstein D."/>
            <person name="Davis R.W."/>
            <person name="Johnston M."/>
            <person name="Andrews S."/>
            <person name="Brinkman R."/>
            <person name="Cooper J."/>
            <person name="Ding H."/>
            <person name="Du Z."/>
            <person name="Favello A."/>
            <person name="Fulton L."/>
            <person name="Gattung S."/>
            <person name="Greco T."/>
            <person name="Hallsworth K."/>
            <person name="Hawkins J."/>
            <person name="Hillier L.W."/>
            <person name="Jier M."/>
            <person name="Johnson D."/>
            <person name="Johnston L."/>
            <person name="Kirsten J."/>
            <person name="Kucaba T."/>
            <person name="Langston Y."/>
            <person name="Latreille P."/>
            <person name="Le T."/>
            <person name="Mardis E."/>
            <person name="Menezes S."/>
            <person name="Miller N."/>
            <person name="Nhan M."/>
            <person name="Pauley A."/>
            <person name="Peluso D."/>
            <person name="Rifkin L."/>
            <person name="Riles L."/>
            <person name="Taich A."/>
            <person name="Trevaskis E."/>
            <person name="Vignati D."/>
            <person name="Wilcox L."/>
            <person name="Wohldman P."/>
            <person name="Vaudin M."/>
            <person name="Wilson R."/>
            <person name="Waterston R."/>
            <person name="Albermann K."/>
            <person name="Hani J."/>
            <person name="Heumann K."/>
            <person name="Kleine K."/>
            <person name="Mewes H.-W."/>
            <person name="Zollner A."/>
            <person name="Zaccaria P."/>
        </authorList>
    </citation>
    <scope>NUCLEOTIDE SEQUENCE [LARGE SCALE GENOMIC DNA]</scope>
    <source>
        <strain>ATCC 204508 / S288c</strain>
    </source>
</reference>
<reference key="2">
    <citation type="journal article" date="2014" name="G3 (Bethesda)">
        <title>The reference genome sequence of Saccharomyces cerevisiae: Then and now.</title>
        <authorList>
            <person name="Engel S.R."/>
            <person name="Dietrich F.S."/>
            <person name="Fisk D.G."/>
            <person name="Binkley G."/>
            <person name="Balakrishnan R."/>
            <person name="Costanzo M.C."/>
            <person name="Dwight S.S."/>
            <person name="Hitz B.C."/>
            <person name="Karra K."/>
            <person name="Nash R.S."/>
            <person name="Weng S."/>
            <person name="Wong E.D."/>
            <person name="Lloyd P."/>
            <person name="Skrzypek M.S."/>
            <person name="Miyasato S.R."/>
            <person name="Simison M."/>
            <person name="Cherry J.M."/>
        </authorList>
    </citation>
    <scope>GENOME REANNOTATION</scope>
    <source>
        <strain>ATCC 204508 / S288c</strain>
    </source>
</reference>
<dbReference type="EMBL" id="Z74142">
    <property type="protein sequence ID" value="CAA98660.1"/>
    <property type="molecule type" value="Genomic_DNA"/>
</dbReference>
<dbReference type="PIR" id="S67636">
    <property type="entry name" value="S67636"/>
</dbReference>
<dbReference type="DIP" id="DIP-5162N"/>
<dbReference type="IntAct" id="Q07509">
    <property type="interactions" value="2"/>
</dbReference>
<dbReference type="PaxDb" id="4932-YDL094C"/>
<dbReference type="EnsemblFungi" id="YDL094C_mRNA">
    <property type="protein sequence ID" value="YDL094C"/>
    <property type="gene ID" value="YDL094C"/>
</dbReference>
<dbReference type="AGR" id="SGD:S000002252"/>
<dbReference type="SGD" id="S000002252">
    <property type="gene designation" value="YDL094C"/>
</dbReference>
<dbReference type="HOGENOM" id="CLU_134599_0_0_1"/>
<dbReference type="GO" id="GO:0016020">
    <property type="term" value="C:membrane"/>
    <property type="evidence" value="ECO:0007669"/>
    <property type="project" value="UniProtKB-SubCell"/>
</dbReference>
<accession>Q07509</accession>